<protein>
    <recommendedName>
        <fullName evidence="1">Thymidine kinase</fullName>
        <ecNumber evidence="1">2.7.1.21</ecNumber>
    </recommendedName>
</protein>
<sequence length="193" mass="21525">MIYGSLDHGFIEVIVGPMFSGKSEELIRRIKRAQIAKQKVQVFKPAIDDRYSIDKVVSHNGTNINAISVVKAFEIIELLEEDTEVIAIDEIQFFDHSIVDVVREIADLGKRVICAGLDMDFRGEPFGPTPDVMAIAESVDKLTAICVKCGNPATRTQRLINGKPAKYDDPIILVGAHETYEARCRKCHEVPRT</sequence>
<accession>B0K7G9</accession>
<feature type="chain" id="PRO_1000095436" description="Thymidine kinase">
    <location>
        <begin position="1"/>
        <end position="193"/>
    </location>
</feature>
<feature type="active site" description="Proton acceptor" evidence="1">
    <location>
        <position position="90"/>
    </location>
</feature>
<feature type="binding site" evidence="1">
    <location>
        <begin position="16"/>
        <end position="23"/>
    </location>
    <ligand>
        <name>ATP</name>
        <dbReference type="ChEBI" id="CHEBI:30616"/>
    </ligand>
</feature>
<feature type="binding site" evidence="1">
    <location>
        <begin position="89"/>
        <end position="92"/>
    </location>
    <ligand>
        <name>ATP</name>
        <dbReference type="ChEBI" id="CHEBI:30616"/>
    </ligand>
</feature>
<feature type="binding site" evidence="1">
    <location>
        <position position="146"/>
    </location>
    <ligand>
        <name>Zn(2+)</name>
        <dbReference type="ChEBI" id="CHEBI:29105"/>
    </ligand>
</feature>
<feature type="binding site" evidence="1">
    <location>
        <position position="149"/>
    </location>
    <ligand>
        <name>Zn(2+)</name>
        <dbReference type="ChEBI" id="CHEBI:29105"/>
    </ligand>
</feature>
<feature type="binding site" evidence="1">
    <location>
        <position position="184"/>
    </location>
    <ligand>
        <name>Zn(2+)</name>
        <dbReference type="ChEBI" id="CHEBI:29105"/>
    </ligand>
</feature>
<feature type="binding site" evidence="1">
    <location>
        <position position="187"/>
    </location>
    <ligand>
        <name>Zn(2+)</name>
        <dbReference type="ChEBI" id="CHEBI:29105"/>
    </ligand>
</feature>
<proteinExistence type="inferred from homology"/>
<organism>
    <name type="scientific">Thermoanaerobacter pseudethanolicus (strain ATCC 33223 / 39E)</name>
    <name type="common">Clostridium thermohydrosulfuricum</name>
    <dbReference type="NCBI Taxonomy" id="340099"/>
    <lineage>
        <taxon>Bacteria</taxon>
        <taxon>Bacillati</taxon>
        <taxon>Bacillota</taxon>
        <taxon>Clostridia</taxon>
        <taxon>Thermoanaerobacterales</taxon>
        <taxon>Thermoanaerobacteraceae</taxon>
        <taxon>Thermoanaerobacter</taxon>
    </lineage>
</organism>
<name>KITH_THEP3</name>
<evidence type="ECO:0000255" key="1">
    <source>
        <dbReference type="HAMAP-Rule" id="MF_00124"/>
    </source>
</evidence>
<dbReference type="EC" id="2.7.1.21" evidence="1"/>
<dbReference type="EMBL" id="CP000924">
    <property type="protein sequence ID" value="ABY95735.1"/>
    <property type="molecule type" value="Genomic_DNA"/>
</dbReference>
<dbReference type="RefSeq" id="WP_009051986.1">
    <property type="nucleotide sequence ID" value="NC_010321.1"/>
</dbReference>
<dbReference type="SMR" id="B0K7G9"/>
<dbReference type="STRING" id="340099.Teth39_2112"/>
<dbReference type="KEGG" id="tpd:Teth39_2112"/>
<dbReference type="eggNOG" id="COG1435">
    <property type="taxonomic scope" value="Bacteria"/>
</dbReference>
<dbReference type="HOGENOM" id="CLU_064400_3_0_9"/>
<dbReference type="Proteomes" id="UP000002156">
    <property type="component" value="Chromosome"/>
</dbReference>
<dbReference type="GO" id="GO:0005829">
    <property type="term" value="C:cytosol"/>
    <property type="evidence" value="ECO:0007669"/>
    <property type="project" value="TreeGrafter"/>
</dbReference>
<dbReference type="GO" id="GO:0005524">
    <property type="term" value="F:ATP binding"/>
    <property type="evidence" value="ECO:0007669"/>
    <property type="project" value="UniProtKB-UniRule"/>
</dbReference>
<dbReference type="GO" id="GO:0004797">
    <property type="term" value="F:thymidine kinase activity"/>
    <property type="evidence" value="ECO:0007669"/>
    <property type="project" value="UniProtKB-UniRule"/>
</dbReference>
<dbReference type="GO" id="GO:0008270">
    <property type="term" value="F:zinc ion binding"/>
    <property type="evidence" value="ECO:0007669"/>
    <property type="project" value="UniProtKB-UniRule"/>
</dbReference>
<dbReference type="GO" id="GO:0071897">
    <property type="term" value="P:DNA biosynthetic process"/>
    <property type="evidence" value="ECO:0007669"/>
    <property type="project" value="UniProtKB-KW"/>
</dbReference>
<dbReference type="GO" id="GO:0046104">
    <property type="term" value="P:thymidine metabolic process"/>
    <property type="evidence" value="ECO:0007669"/>
    <property type="project" value="TreeGrafter"/>
</dbReference>
<dbReference type="FunFam" id="3.30.60.20:FF:000026">
    <property type="entry name" value="Thymidine kinase"/>
    <property type="match status" value="1"/>
</dbReference>
<dbReference type="FunFam" id="3.40.50.300:FF:000384">
    <property type="entry name" value="Thymidine kinase"/>
    <property type="match status" value="1"/>
</dbReference>
<dbReference type="Gene3D" id="3.30.60.20">
    <property type="match status" value="1"/>
</dbReference>
<dbReference type="Gene3D" id="3.40.50.300">
    <property type="entry name" value="P-loop containing nucleotide triphosphate hydrolases"/>
    <property type="match status" value="1"/>
</dbReference>
<dbReference type="HAMAP" id="MF_00124">
    <property type="entry name" value="Thymidine_kinase"/>
    <property type="match status" value="1"/>
</dbReference>
<dbReference type="InterPro" id="IPR027417">
    <property type="entry name" value="P-loop_NTPase"/>
</dbReference>
<dbReference type="InterPro" id="IPR001267">
    <property type="entry name" value="Thymidine_kinase"/>
</dbReference>
<dbReference type="InterPro" id="IPR020633">
    <property type="entry name" value="Thymidine_kinase_CS"/>
</dbReference>
<dbReference type="NCBIfam" id="NF003296">
    <property type="entry name" value="PRK04296.1-1"/>
    <property type="match status" value="1"/>
</dbReference>
<dbReference type="PANTHER" id="PTHR11441">
    <property type="entry name" value="THYMIDINE KINASE"/>
    <property type="match status" value="1"/>
</dbReference>
<dbReference type="PANTHER" id="PTHR11441:SF0">
    <property type="entry name" value="THYMIDINE KINASE, CYTOSOLIC"/>
    <property type="match status" value="1"/>
</dbReference>
<dbReference type="Pfam" id="PF00265">
    <property type="entry name" value="TK"/>
    <property type="match status" value="1"/>
</dbReference>
<dbReference type="PIRSF" id="PIRSF035805">
    <property type="entry name" value="TK_cell"/>
    <property type="match status" value="1"/>
</dbReference>
<dbReference type="SUPFAM" id="SSF57716">
    <property type="entry name" value="Glucocorticoid receptor-like (DNA-binding domain)"/>
    <property type="match status" value="1"/>
</dbReference>
<dbReference type="SUPFAM" id="SSF52540">
    <property type="entry name" value="P-loop containing nucleoside triphosphate hydrolases"/>
    <property type="match status" value="1"/>
</dbReference>
<dbReference type="PROSITE" id="PS00603">
    <property type="entry name" value="TK_CELLULAR_TYPE"/>
    <property type="match status" value="1"/>
</dbReference>
<keyword id="KW-0067">ATP-binding</keyword>
<keyword id="KW-0963">Cytoplasm</keyword>
<keyword id="KW-0237">DNA synthesis</keyword>
<keyword id="KW-0418">Kinase</keyword>
<keyword id="KW-0479">Metal-binding</keyword>
<keyword id="KW-0547">Nucleotide-binding</keyword>
<keyword id="KW-1185">Reference proteome</keyword>
<keyword id="KW-0808">Transferase</keyword>
<keyword id="KW-0862">Zinc</keyword>
<reference key="1">
    <citation type="submission" date="2008-01" db="EMBL/GenBank/DDBJ databases">
        <title>Complete sequence of Thermoanaerobacter pseudethanolicus 39E.</title>
        <authorList>
            <person name="Copeland A."/>
            <person name="Lucas S."/>
            <person name="Lapidus A."/>
            <person name="Barry K."/>
            <person name="Glavina del Rio T."/>
            <person name="Dalin E."/>
            <person name="Tice H."/>
            <person name="Pitluck S."/>
            <person name="Bruce D."/>
            <person name="Goodwin L."/>
            <person name="Saunders E."/>
            <person name="Brettin T."/>
            <person name="Detter J.C."/>
            <person name="Han C."/>
            <person name="Schmutz J."/>
            <person name="Larimer F."/>
            <person name="Land M."/>
            <person name="Hauser L."/>
            <person name="Kyrpides N."/>
            <person name="Lykidis A."/>
            <person name="Hemme C."/>
            <person name="Fields M.W."/>
            <person name="He Z."/>
            <person name="Zhou J."/>
            <person name="Richardson P."/>
        </authorList>
    </citation>
    <scope>NUCLEOTIDE SEQUENCE [LARGE SCALE GENOMIC DNA]</scope>
    <source>
        <strain>ATCC 33223 / DSM 2355 / 39E</strain>
    </source>
</reference>
<gene>
    <name evidence="1" type="primary">tdk</name>
    <name type="ordered locus">Teth39_2112</name>
</gene>
<comment type="catalytic activity">
    <reaction evidence="1">
        <text>thymidine + ATP = dTMP + ADP + H(+)</text>
        <dbReference type="Rhea" id="RHEA:19129"/>
        <dbReference type="ChEBI" id="CHEBI:15378"/>
        <dbReference type="ChEBI" id="CHEBI:17748"/>
        <dbReference type="ChEBI" id="CHEBI:30616"/>
        <dbReference type="ChEBI" id="CHEBI:63528"/>
        <dbReference type="ChEBI" id="CHEBI:456216"/>
        <dbReference type="EC" id="2.7.1.21"/>
    </reaction>
</comment>
<comment type="subunit">
    <text evidence="1">Homotetramer.</text>
</comment>
<comment type="subcellular location">
    <subcellularLocation>
        <location evidence="1">Cytoplasm</location>
    </subcellularLocation>
</comment>
<comment type="similarity">
    <text evidence="1">Belongs to the thymidine kinase family.</text>
</comment>